<proteinExistence type="inferred from homology"/>
<organism>
    <name type="scientific">Listeria monocytogenes serotype 4b (strain CLIP80459)</name>
    <dbReference type="NCBI Taxonomy" id="568819"/>
    <lineage>
        <taxon>Bacteria</taxon>
        <taxon>Bacillati</taxon>
        <taxon>Bacillota</taxon>
        <taxon>Bacilli</taxon>
        <taxon>Bacillales</taxon>
        <taxon>Listeriaceae</taxon>
        <taxon>Listeria</taxon>
    </lineage>
</organism>
<reference key="1">
    <citation type="journal article" date="2012" name="BMC Genomics">
        <title>Comparative genomics and transcriptomics of lineages I, II, and III strains of Listeria monocytogenes.</title>
        <authorList>
            <person name="Hain T."/>
            <person name="Ghai R."/>
            <person name="Billion A."/>
            <person name="Kuenne C.T."/>
            <person name="Steinweg C."/>
            <person name="Izar B."/>
            <person name="Mohamed W."/>
            <person name="Mraheil M."/>
            <person name="Domann E."/>
            <person name="Schaffrath S."/>
            <person name="Karst U."/>
            <person name="Goesmann A."/>
            <person name="Oehm S."/>
            <person name="Puhler A."/>
            <person name="Merkl R."/>
            <person name="Vorwerk S."/>
            <person name="Glaser P."/>
            <person name="Garrido P."/>
            <person name="Rusniok C."/>
            <person name="Buchrieser C."/>
            <person name="Goebel W."/>
            <person name="Chakraborty T."/>
        </authorList>
    </citation>
    <scope>NUCLEOTIDE SEQUENCE [LARGE SCALE GENOMIC DNA]</scope>
    <source>
        <strain>CLIP80459</strain>
    </source>
</reference>
<feature type="chain" id="PRO_1000204235" description="Uroporphyrinogen decarboxylase">
    <location>
        <begin position="1"/>
        <end position="353"/>
    </location>
</feature>
<feature type="binding site" evidence="1">
    <location>
        <begin position="27"/>
        <end position="31"/>
    </location>
    <ligand>
        <name>substrate</name>
    </ligand>
</feature>
<feature type="binding site" evidence="1">
    <location>
        <position position="46"/>
    </location>
    <ligand>
        <name>substrate</name>
    </ligand>
</feature>
<feature type="binding site" evidence="1">
    <location>
        <position position="76"/>
    </location>
    <ligand>
        <name>substrate</name>
    </ligand>
</feature>
<feature type="binding site" evidence="1">
    <location>
        <position position="152"/>
    </location>
    <ligand>
        <name>substrate</name>
    </ligand>
</feature>
<feature type="binding site" evidence="1">
    <location>
        <position position="207"/>
    </location>
    <ligand>
        <name>substrate</name>
    </ligand>
</feature>
<feature type="binding site" evidence="1">
    <location>
        <position position="321"/>
    </location>
    <ligand>
        <name>substrate</name>
    </ligand>
</feature>
<feature type="site" description="Transition state stabilizer" evidence="1">
    <location>
        <position position="76"/>
    </location>
</feature>
<name>DCUP_LISMC</name>
<evidence type="ECO:0000255" key="1">
    <source>
        <dbReference type="HAMAP-Rule" id="MF_00218"/>
    </source>
</evidence>
<comment type="function">
    <text evidence="1">Catalyzes the decarboxylation of four acetate groups of uroporphyrinogen-III to yield coproporphyrinogen-III.</text>
</comment>
<comment type="catalytic activity">
    <reaction evidence="1">
        <text>uroporphyrinogen III + 4 H(+) = coproporphyrinogen III + 4 CO2</text>
        <dbReference type="Rhea" id="RHEA:19865"/>
        <dbReference type="ChEBI" id="CHEBI:15378"/>
        <dbReference type="ChEBI" id="CHEBI:16526"/>
        <dbReference type="ChEBI" id="CHEBI:57308"/>
        <dbReference type="ChEBI" id="CHEBI:57309"/>
        <dbReference type="EC" id="4.1.1.37"/>
    </reaction>
</comment>
<comment type="pathway">
    <text evidence="1">Porphyrin-containing compound metabolism; protoporphyrin-IX biosynthesis; coproporphyrinogen-III from 5-aminolevulinate: step 4/4.</text>
</comment>
<comment type="subunit">
    <text evidence="1">Homodimer.</text>
</comment>
<comment type="subcellular location">
    <subcellularLocation>
        <location evidence="1">Cytoplasm</location>
    </subcellularLocation>
</comment>
<comment type="similarity">
    <text evidence="1">Belongs to the uroporphyrinogen decarboxylase family.</text>
</comment>
<accession>C1KXG7</accession>
<dbReference type="EC" id="4.1.1.37" evidence="1"/>
<dbReference type="EMBL" id="FM242711">
    <property type="protein sequence ID" value="CAS05996.1"/>
    <property type="molecule type" value="Genomic_DNA"/>
</dbReference>
<dbReference type="RefSeq" id="WP_012681412.1">
    <property type="nucleotide sequence ID" value="NC_012488.1"/>
</dbReference>
<dbReference type="SMR" id="C1KXG7"/>
<dbReference type="KEGG" id="lmc:Lm4b_02239"/>
<dbReference type="HOGENOM" id="CLU_040933_0_1_9"/>
<dbReference type="UniPathway" id="UPA00251">
    <property type="reaction ID" value="UER00321"/>
</dbReference>
<dbReference type="GO" id="GO:0005829">
    <property type="term" value="C:cytosol"/>
    <property type="evidence" value="ECO:0007669"/>
    <property type="project" value="TreeGrafter"/>
</dbReference>
<dbReference type="GO" id="GO:0004853">
    <property type="term" value="F:uroporphyrinogen decarboxylase activity"/>
    <property type="evidence" value="ECO:0007669"/>
    <property type="project" value="UniProtKB-UniRule"/>
</dbReference>
<dbReference type="GO" id="GO:0006782">
    <property type="term" value="P:protoporphyrinogen IX biosynthetic process"/>
    <property type="evidence" value="ECO:0007669"/>
    <property type="project" value="UniProtKB-UniRule"/>
</dbReference>
<dbReference type="CDD" id="cd00717">
    <property type="entry name" value="URO-D"/>
    <property type="match status" value="1"/>
</dbReference>
<dbReference type="FunFam" id="3.20.20.210:FF:000005">
    <property type="entry name" value="Uroporphyrinogen decarboxylase"/>
    <property type="match status" value="1"/>
</dbReference>
<dbReference type="Gene3D" id="3.20.20.210">
    <property type="match status" value="1"/>
</dbReference>
<dbReference type="HAMAP" id="MF_00218">
    <property type="entry name" value="URO_D"/>
    <property type="match status" value="1"/>
</dbReference>
<dbReference type="InterPro" id="IPR038071">
    <property type="entry name" value="UROD/MetE-like_sf"/>
</dbReference>
<dbReference type="InterPro" id="IPR006361">
    <property type="entry name" value="Uroporphyrinogen_deCO2ase_HemE"/>
</dbReference>
<dbReference type="InterPro" id="IPR000257">
    <property type="entry name" value="Uroporphyrinogen_deCOase"/>
</dbReference>
<dbReference type="NCBIfam" id="TIGR01464">
    <property type="entry name" value="hemE"/>
    <property type="match status" value="1"/>
</dbReference>
<dbReference type="PANTHER" id="PTHR21091">
    <property type="entry name" value="METHYLTETRAHYDROFOLATE:HOMOCYSTEINE METHYLTRANSFERASE RELATED"/>
    <property type="match status" value="1"/>
</dbReference>
<dbReference type="PANTHER" id="PTHR21091:SF169">
    <property type="entry name" value="UROPORPHYRINOGEN DECARBOXYLASE"/>
    <property type="match status" value="1"/>
</dbReference>
<dbReference type="Pfam" id="PF01208">
    <property type="entry name" value="URO-D"/>
    <property type="match status" value="1"/>
</dbReference>
<dbReference type="SUPFAM" id="SSF51726">
    <property type="entry name" value="UROD/MetE-like"/>
    <property type="match status" value="1"/>
</dbReference>
<dbReference type="PROSITE" id="PS00906">
    <property type="entry name" value="UROD_1"/>
    <property type="match status" value="1"/>
</dbReference>
<dbReference type="PROSITE" id="PS00907">
    <property type="entry name" value="UROD_2"/>
    <property type="match status" value="1"/>
</dbReference>
<keyword id="KW-0963">Cytoplasm</keyword>
<keyword id="KW-0210">Decarboxylase</keyword>
<keyword id="KW-0456">Lyase</keyword>
<keyword id="KW-0627">Porphyrin biosynthesis</keyword>
<protein>
    <recommendedName>
        <fullName evidence="1">Uroporphyrinogen decarboxylase</fullName>
        <shortName evidence="1">UPD</shortName>
        <shortName evidence="1">URO-D</shortName>
        <ecNumber evidence="1">4.1.1.37</ecNumber>
    </recommendedName>
</protein>
<gene>
    <name evidence="1" type="primary">hemE</name>
    <name type="ordered locus">Lm4b_02239</name>
</gene>
<sequence>MTKITNDLFLKAARKEQVDRIPVWYMRQAGRSQPEYRKLKEKYSLFEITHQPEICAYVTKLPVDQYGVDAAILYKDIMTPLPGMGVDVEIKSGIGPVIHNPIRSFQDVEKLTMFKPEIEVPYVLDTIKLLADDMLDVPLIGFAGAPFTLASYMIEGGPSKNYHQTKSFMYREPEVWAILMEKLGRMTANYLIAQINAGTSAVQLFDSWVGALSRADYAEYIRPVIEMIVREVKAVHPTTPIIMQAVGASHLLAEWETMPLDVVGVDWRETITSARKKVPTKAIQGNLDPSTLLAPEKCLKEANRILQEGVLEPGYIFNLGHGVFPEVPPEMLKKLTNYIHERSEILLKKDDIK</sequence>